<evidence type="ECO:0000255" key="1">
    <source>
        <dbReference type="HAMAP-Rule" id="MF_00378"/>
    </source>
</evidence>
<comment type="function">
    <text evidence="1">Bidirectionally degrades single-stranded DNA into large acid-insoluble oligonucleotides, which are then degraded further into small acid-soluble oligonucleotides.</text>
</comment>
<comment type="catalytic activity">
    <reaction evidence="1">
        <text>Exonucleolytic cleavage in either 5'- to 3'- or 3'- to 5'-direction to yield nucleoside 5'-phosphates.</text>
        <dbReference type="EC" id="3.1.11.6"/>
    </reaction>
</comment>
<comment type="subunit">
    <text evidence="1">Heterooligomer composed of large and small subunits.</text>
</comment>
<comment type="subcellular location">
    <subcellularLocation>
        <location evidence="1">Cytoplasm</location>
    </subcellularLocation>
</comment>
<comment type="similarity">
    <text evidence="1">Belongs to the XseA family.</text>
</comment>
<reference key="1">
    <citation type="submission" date="2007-08" db="EMBL/GenBank/DDBJ databases">
        <authorList>
            <consortium name="The Citrobacter koseri Genome Sequencing Project"/>
            <person name="McClelland M."/>
            <person name="Sanderson E.K."/>
            <person name="Porwollik S."/>
            <person name="Spieth J."/>
            <person name="Clifton W.S."/>
            <person name="Latreille P."/>
            <person name="Courtney L."/>
            <person name="Wang C."/>
            <person name="Pepin K."/>
            <person name="Bhonagiri V."/>
            <person name="Nash W."/>
            <person name="Johnson M."/>
            <person name="Thiruvilangam P."/>
            <person name="Wilson R."/>
        </authorList>
    </citation>
    <scope>NUCLEOTIDE SEQUENCE [LARGE SCALE GENOMIC DNA]</scope>
    <source>
        <strain>ATCC BAA-895 / CDC 4225-83 / SGSC4696</strain>
    </source>
</reference>
<name>EX7L_CITK8</name>
<organism>
    <name type="scientific">Citrobacter koseri (strain ATCC BAA-895 / CDC 4225-83 / SGSC4696)</name>
    <dbReference type="NCBI Taxonomy" id="290338"/>
    <lineage>
        <taxon>Bacteria</taxon>
        <taxon>Pseudomonadati</taxon>
        <taxon>Pseudomonadota</taxon>
        <taxon>Gammaproteobacteria</taxon>
        <taxon>Enterobacterales</taxon>
        <taxon>Enterobacteriaceae</taxon>
        <taxon>Citrobacter</taxon>
    </lineage>
</organism>
<proteinExistence type="inferred from homology"/>
<keyword id="KW-0963">Cytoplasm</keyword>
<keyword id="KW-0269">Exonuclease</keyword>
<keyword id="KW-0378">Hydrolase</keyword>
<keyword id="KW-0540">Nuclease</keyword>
<keyword id="KW-1185">Reference proteome</keyword>
<sequence length="457" mass="51814">MLSSQTSTIFTVSRLNQTVRLLLEQEMGQVWISGEISNFTQPASGHWYFTLKDDTAQVRCAMFRNSNRRVTFRPQHGQQVLVRANITLYEPRGDYQIIIESMQPAGEGLLQQKYELLKAKLQAEGLFDQQYKQPLPSPAHCVGVITSKTGAALHDILHVLKRRDPSLPVIIYPTAVQGDDAPGQIVRAIERANARNECDVLIVGRGGGSLEDLWSFNDERVARAIFASRIPVVSAVGHETDVTIADFVADLRAPTPSAAAEIVSRNQQELLRQIQSAQQRLGMAMDYYLANRNRRFTQLFHRLQQQHPQLRLARQQTMLERLRQRMNFALDNQLKRAASRQQRVLQRLNQQNPQPRIYRAQTRIQQLEYRLAENVRARLSATRERFGNAVTHLEAVSPLSTLARGYSVTTATDGKVLKQTRQVKAGDVLTTRLSDGWVESEVKGVTTAKKTRRKKTD</sequence>
<dbReference type="EC" id="3.1.11.6" evidence="1"/>
<dbReference type="EMBL" id="CP000822">
    <property type="protein sequence ID" value="ABV11441.1"/>
    <property type="molecule type" value="Genomic_DNA"/>
</dbReference>
<dbReference type="RefSeq" id="WP_012131272.1">
    <property type="nucleotide sequence ID" value="NC_009792.1"/>
</dbReference>
<dbReference type="SMR" id="A8AD78"/>
<dbReference type="STRING" id="290338.CKO_00278"/>
<dbReference type="GeneID" id="45134556"/>
<dbReference type="KEGG" id="cko:CKO_00278"/>
<dbReference type="HOGENOM" id="CLU_023625_3_1_6"/>
<dbReference type="OrthoDB" id="9802795at2"/>
<dbReference type="Proteomes" id="UP000008148">
    <property type="component" value="Chromosome"/>
</dbReference>
<dbReference type="GO" id="GO:0005737">
    <property type="term" value="C:cytoplasm"/>
    <property type="evidence" value="ECO:0007669"/>
    <property type="project" value="UniProtKB-SubCell"/>
</dbReference>
<dbReference type="GO" id="GO:0009318">
    <property type="term" value="C:exodeoxyribonuclease VII complex"/>
    <property type="evidence" value="ECO:0007669"/>
    <property type="project" value="InterPro"/>
</dbReference>
<dbReference type="GO" id="GO:0008855">
    <property type="term" value="F:exodeoxyribonuclease VII activity"/>
    <property type="evidence" value="ECO:0007669"/>
    <property type="project" value="UniProtKB-UniRule"/>
</dbReference>
<dbReference type="GO" id="GO:0003676">
    <property type="term" value="F:nucleic acid binding"/>
    <property type="evidence" value="ECO:0007669"/>
    <property type="project" value="InterPro"/>
</dbReference>
<dbReference type="GO" id="GO:0006308">
    <property type="term" value="P:DNA catabolic process"/>
    <property type="evidence" value="ECO:0007669"/>
    <property type="project" value="UniProtKB-UniRule"/>
</dbReference>
<dbReference type="CDD" id="cd04489">
    <property type="entry name" value="ExoVII_LU_OBF"/>
    <property type="match status" value="1"/>
</dbReference>
<dbReference type="HAMAP" id="MF_00378">
    <property type="entry name" value="Exonuc_7_L"/>
    <property type="match status" value="1"/>
</dbReference>
<dbReference type="InterPro" id="IPR003753">
    <property type="entry name" value="Exonuc_VII_L"/>
</dbReference>
<dbReference type="InterPro" id="IPR020579">
    <property type="entry name" value="Exonuc_VII_lsu_C"/>
</dbReference>
<dbReference type="InterPro" id="IPR025824">
    <property type="entry name" value="OB-fold_nuc-bd_dom"/>
</dbReference>
<dbReference type="NCBIfam" id="TIGR00237">
    <property type="entry name" value="xseA"/>
    <property type="match status" value="1"/>
</dbReference>
<dbReference type="PANTHER" id="PTHR30008">
    <property type="entry name" value="EXODEOXYRIBONUCLEASE 7 LARGE SUBUNIT"/>
    <property type="match status" value="1"/>
</dbReference>
<dbReference type="PANTHER" id="PTHR30008:SF0">
    <property type="entry name" value="EXODEOXYRIBONUCLEASE 7 LARGE SUBUNIT"/>
    <property type="match status" value="1"/>
</dbReference>
<dbReference type="Pfam" id="PF02601">
    <property type="entry name" value="Exonuc_VII_L"/>
    <property type="match status" value="1"/>
</dbReference>
<dbReference type="Pfam" id="PF13742">
    <property type="entry name" value="tRNA_anti_2"/>
    <property type="match status" value="1"/>
</dbReference>
<gene>
    <name evidence="1" type="primary">xseA</name>
    <name type="ordered locus">CKO_00278</name>
</gene>
<accession>A8AD78</accession>
<protein>
    <recommendedName>
        <fullName evidence="1">Exodeoxyribonuclease 7 large subunit</fullName>
        <ecNumber evidence="1">3.1.11.6</ecNumber>
    </recommendedName>
    <alternativeName>
        <fullName evidence="1">Exodeoxyribonuclease VII large subunit</fullName>
        <shortName evidence="1">Exonuclease VII large subunit</shortName>
    </alternativeName>
</protein>
<feature type="chain" id="PRO_1000048766" description="Exodeoxyribonuclease 7 large subunit">
    <location>
        <begin position="1"/>
        <end position="457"/>
    </location>
</feature>